<comment type="similarity">
    <text evidence="1">Belongs to the bacterial ribosomal protein bS21 family.</text>
</comment>
<accession>Q051D8</accession>
<gene>
    <name evidence="1" type="primary">rpsU</name>
    <name type="ordered locus">LBL_1598</name>
</gene>
<name>RS21_LEPBL</name>
<feature type="chain" id="PRO_1000005132" description="Small ribosomal subunit protein bS21">
    <location>
        <begin position="1"/>
        <end position="69"/>
    </location>
</feature>
<feature type="region of interest" description="Disordered" evidence="2">
    <location>
        <begin position="49"/>
        <end position="69"/>
    </location>
</feature>
<sequence>MVGIIVKDGESIESALKRFKRDCANAGIMSEIKRREYFEKPSIKKKKAIESAKRKAEKKKRLFSKKDKA</sequence>
<proteinExistence type="inferred from homology"/>
<keyword id="KW-0687">Ribonucleoprotein</keyword>
<keyword id="KW-0689">Ribosomal protein</keyword>
<dbReference type="EMBL" id="CP000348">
    <property type="protein sequence ID" value="ABJ79057.1"/>
    <property type="molecule type" value="Genomic_DNA"/>
</dbReference>
<dbReference type="RefSeq" id="WP_000232823.1">
    <property type="nucleotide sequence ID" value="NC_008508.1"/>
</dbReference>
<dbReference type="SMR" id="Q051D8"/>
<dbReference type="GeneID" id="61174136"/>
<dbReference type="KEGG" id="lbl:LBL_1598"/>
<dbReference type="HOGENOM" id="CLU_159258_1_2_12"/>
<dbReference type="GO" id="GO:1990904">
    <property type="term" value="C:ribonucleoprotein complex"/>
    <property type="evidence" value="ECO:0007669"/>
    <property type="project" value="UniProtKB-KW"/>
</dbReference>
<dbReference type="GO" id="GO:0005840">
    <property type="term" value="C:ribosome"/>
    <property type="evidence" value="ECO:0007669"/>
    <property type="project" value="UniProtKB-KW"/>
</dbReference>
<dbReference type="GO" id="GO:0003735">
    <property type="term" value="F:structural constituent of ribosome"/>
    <property type="evidence" value="ECO:0007669"/>
    <property type="project" value="InterPro"/>
</dbReference>
<dbReference type="GO" id="GO:0006412">
    <property type="term" value="P:translation"/>
    <property type="evidence" value="ECO:0007669"/>
    <property type="project" value="UniProtKB-UniRule"/>
</dbReference>
<dbReference type="Gene3D" id="1.20.5.1150">
    <property type="entry name" value="Ribosomal protein S8"/>
    <property type="match status" value="1"/>
</dbReference>
<dbReference type="HAMAP" id="MF_00358">
    <property type="entry name" value="Ribosomal_bS21"/>
    <property type="match status" value="1"/>
</dbReference>
<dbReference type="InterPro" id="IPR001911">
    <property type="entry name" value="Ribosomal_bS21"/>
</dbReference>
<dbReference type="InterPro" id="IPR038380">
    <property type="entry name" value="Ribosomal_bS21_sf"/>
</dbReference>
<dbReference type="NCBIfam" id="TIGR00030">
    <property type="entry name" value="S21p"/>
    <property type="match status" value="1"/>
</dbReference>
<dbReference type="PANTHER" id="PTHR21109">
    <property type="entry name" value="MITOCHONDRIAL 28S RIBOSOMAL PROTEIN S21"/>
    <property type="match status" value="1"/>
</dbReference>
<dbReference type="PANTHER" id="PTHR21109:SF22">
    <property type="entry name" value="SMALL RIBOSOMAL SUBUNIT PROTEIN BS21"/>
    <property type="match status" value="1"/>
</dbReference>
<dbReference type="Pfam" id="PF01165">
    <property type="entry name" value="Ribosomal_S21"/>
    <property type="match status" value="1"/>
</dbReference>
<dbReference type="PRINTS" id="PR00976">
    <property type="entry name" value="RIBOSOMALS21"/>
</dbReference>
<organism>
    <name type="scientific">Leptospira borgpetersenii serovar Hardjo-bovis (strain L550)</name>
    <dbReference type="NCBI Taxonomy" id="355276"/>
    <lineage>
        <taxon>Bacteria</taxon>
        <taxon>Pseudomonadati</taxon>
        <taxon>Spirochaetota</taxon>
        <taxon>Spirochaetia</taxon>
        <taxon>Leptospirales</taxon>
        <taxon>Leptospiraceae</taxon>
        <taxon>Leptospira</taxon>
    </lineage>
</organism>
<evidence type="ECO:0000255" key="1">
    <source>
        <dbReference type="HAMAP-Rule" id="MF_00358"/>
    </source>
</evidence>
<evidence type="ECO:0000256" key="2">
    <source>
        <dbReference type="SAM" id="MobiDB-lite"/>
    </source>
</evidence>
<evidence type="ECO:0000305" key="3"/>
<protein>
    <recommendedName>
        <fullName evidence="1">Small ribosomal subunit protein bS21</fullName>
    </recommendedName>
    <alternativeName>
        <fullName evidence="3">30S ribosomal protein S21</fullName>
    </alternativeName>
</protein>
<reference key="1">
    <citation type="journal article" date="2006" name="Proc. Natl. Acad. Sci. U.S.A.">
        <title>Genome reduction in Leptospira borgpetersenii reflects limited transmission potential.</title>
        <authorList>
            <person name="Bulach D.M."/>
            <person name="Zuerner R.L."/>
            <person name="Wilson P."/>
            <person name="Seemann T."/>
            <person name="McGrath A."/>
            <person name="Cullen P.A."/>
            <person name="Davis J."/>
            <person name="Johnson M."/>
            <person name="Kuczek E."/>
            <person name="Alt D.P."/>
            <person name="Peterson-Burch B."/>
            <person name="Coppel R.L."/>
            <person name="Rood J.I."/>
            <person name="Davies J.K."/>
            <person name="Adler B."/>
        </authorList>
    </citation>
    <scope>NUCLEOTIDE SEQUENCE [LARGE SCALE GENOMIC DNA]</scope>
    <source>
        <strain>L550</strain>
    </source>
</reference>